<comment type="function">
    <text evidence="1">A key translational regulator that binds mRNA to regulate translation initiation and/or mRNA stability. Mediates global changes in gene expression, shifting from rapid growth to stress survival by linking envelope stress, the stringent response and the catabolite repression systems. Usually binds in the 5'-UTR; binding at or near the Shine-Dalgarno sequence prevents ribosome-binding, repressing translation, binding elsewhere in the 5'-UTR can activate translation and/or stabilize the mRNA. Its function is antagonized by small RNA(s).</text>
</comment>
<comment type="subunit">
    <text evidence="1">Homodimer; the beta-strands of each monomer intercalate to form a hydrophobic core, while the alpha-helices form wings that extend away from the core.</text>
</comment>
<comment type="subcellular location">
    <subcellularLocation>
        <location evidence="1">Cytoplasm</location>
    </subcellularLocation>
</comment>
<comment type="similarity">
    <text evidence="1">Belongs to the CsrA/RsmA family.</text>
</comment>
<feature type="chain" id="PRO_0000177090" description="Translational regulator CsrA">
    <location>
        <begin position="1"/>
        <end position="65"/>
    </location>
</feature>
<proteinExistence type="inferred from homology"/>
<dbReference type="EMBL" id="AE014299">
    <property type="protein sequence ID" value="AAN56423.1"/>
    <property type="molecule type" value="Genomic_DNA"/>
</dbReference>
<dbReference type="RefSeq" id="NP_718979.1">
    <property type="nucleotide sequence ID" value="NC_004347.2"/>
</dbReference>
<dbReference type="RefSeq" id="WP_006082602.1">
    <property type="nucleotide sequence ID" value="NZ_CP053946.1"/>
</dbReference>
<dbReference type="SMR" id="Q8EBS3"/>
<dbReference type="STRING" id="211586.SO_3426"/>
<dbReference type="PaxDb" id="211586-SO_3426"/>
<dbReference type="GeneID" id="94727129"/>
<dbReference type="KEGG" id="son:SO_3426"/>
<dbReference type="PATRIC" id="fig|211586.12.peg.3321"/>
<dbReference type="eggNOG" id="COG1551">
    <property type="taxonomic scope" value="Bacteria"/>
</dbReference>
<dbReference type="HOGENOM" id="CLU_164837_2_2_6"/>
<dbReference type="OrthoDB" id="9809061at2"/>
<dbReference type="PhylomeDB" id="Q8EBS3"/>
<dbReference type="BioCyc" id="SONE211586:G1GMP-3197-MONOMER"/>
<dbReference type="PRO" id="PR:Q8EBS3"/>
<dbReference type="Proteomes" id="UP000008186">
    <property type="component" value="Chromosome"/>
</dbReference>
<dbReference type="GO" id="GO:0005829">
    <property type="term" value="C:cytosol"/>
    <property type="evidence" value="ECO:0000318"/>
    <property type="project" value="GO_Central"/>
</dbReference>
<dbReference type="GO" id="GO:0048027">
    <property type="term" value="F:mRNA 5'-UTR binding"/>
    <property type="evidence" value="ECO:0007669"/>
    <property type="project" value="UniProtKB-UniRule"/>
</dbReference>
<dbReference type="GO" id="GO:0006402">
    <property type="term" value="P:mRNA catabolic process"/>
    <property type="evidence" value="ECO:0007669"/>
    <property type="project" value="InterPro"/>
</dbReference>
<dbReference type="GO" id="GO:0045947">
    <property type="term" value="P:negative regulation of translational initiation"/>
    <property type="evidence" value="ECO:0007669"/>
    <property type="project" value="UniProtKB-UniRule"/>
</dbReference>
<dbReference type="GO" id="GO:0045948">
    <property type="term" value="P:positive regulation of translational initiation"/>
    <property type="evidence" value="ECO:0007669"/>
    <property type="project" value="UniProtKB-UniRule"/>
</dbReference>
<dbReference type="GO" id="GO:0006109">
    <property type="term" value="P:regulation of carbohydrate metabolic process"/>
    <property type="evidence" value="ECO:0007669"/>
    <property type="project" value="UniProtKB-UniRule"/>
</dbReference>
<dbReference type="FunFam" id="2.60.40.4380:FF:000001">
    <property type="entry name" value="Translational regulator CsrA"/>
    <property type="match status" value="1"/>
</dbReference>
<dbReference type="Gene3D" id="2.60.40.4380">
    <property type="entry name" value="Translational regulator CsrA"/>
    <property type="match status" value="1"/>
</dbReference>
<dbReference type="HAMAP" id="MF_00167">
    <property type="entry name" value="CsrA"/>
    <property type="match status" value="1"/>
</dbReference>
<dbReference type="InterPro" id="IPR003751">
    <property type="entry name" value="CsrA"/>
</dbReference>
<dbReference type="InterPro" id="IPR036107">
    <property type="entry name" value="CsrA_sf"/>
</dbReference>
<dbReference type="NCBIfam" id="TIGR00202">
    <property type="entry name" value="csrA"/>
    <property type="match status" value="1"/>
</dbReference>
<dbReference type="NCBIfam" id="NF002469">
    <property type="entry name" value="PRK01712.1"/>
    <property type="match status" value="1"/>
</dbReference>
<dbReference type="PANTHER" id="PTHR34984">
    <property type="entry name" value="CARBON STORAGE REGULATOR"/>
    <property type="match status" value="1"/>
</dbReference>
<dbReference type="PANTHER" id="PTHR34984:SF1">
    <property type="entry name" value="CARBON STORAGE REGULATOR"/>
    <property type="match status" value="1"/>
</dbReference>
<dbReference type="Pfam" id="PF02599">
    <property type="entry name" value="CsrA"/>
    <property type="match status" value="1"/>
</dbReference>
<dbReference type="SUPFAM" id="SSF117130">
    <property type="entry name" value="CsrA-like"/>
    <property type="match status" value="1"/>
</dbReference>
<name>CSRA_SHEON</name>
<protein>
    <recommendedName>
        <fullName evidence="1">Translational regulator CsrA</fullName>
    </recommendedName>
    <alternativeName>
        <fullName evidence="1">Carbon storage regulator</fullName>
    </alternativeName>
</protein>
<reference key="1">
    <citation type="journal article" date="2002" name="Nat. Biotechnol.">
        <title>Genome sequence of the dissimilatory metal ion-reducing bacterium Shewanella oneidensis.</title>
        <authorList>
            <person name="Heidelberg J.F."/>
            <person name="Paulsen I.T."/>
            <person name="Nelson K.E."/>
            <person name="Gaidos E.J."/>
            <person name="Nelson W.C."/>
            <person name="Read T.D."/>
            <person name="Eisen J.A."/>
            <person name="Seshadri R."/>
            <person name="Ward N.L."/>
            <person name="Methe B.A."/>
            <person name="Clayton R.A."/>
            <person name="Meyer T."/>
            <person name="Tsapin A."/>
            <person name="Scott J."/>
            <person name="Beanan M.J."/>
            <person name="Brinkac L.M."/>
            <person name="Daugherty S.C."/>
            <person name="DeBoy R.T."/>
            <person name="Dodson R.J."/>
            <person name="Durkin A.S."/>
            <person name="Haft D.H."/>
            <person name="Kolonay J.F."/>
            <person name="Madupu R."/>
            <person name="Peterson J.D."/>
            <person name="Umayam L.A."/>
            <person name="White O."/>
            <person name="Wolf A.M."/>
            <person name="Vamathevan J.J."/>
            <person name="Weidman J.F."/>
            <person name="Impraim M."/>
            <person name="Lee K."/>
            <person name="Berry K.J."/>
            <person name="Lee C."/>
            <person name="Mueller J."/>
            <person name="Khouri H.M."/>
            <person name="Gill J."/>
            <person name="Utterback T.R."/>
            <person name="McDonald L.A."/>
            <person name="Feldblyum T.V."/>
            <person name="Smith H.O."/>
            <person name="Venter J.C."/>
            <person name="Nealson K.H."/>
            <person name="Fraser C.M."/>
        </authorList>
    </citation>
    <scope>NUCLEOTIDE SEQUENCE [LARGE SCALE GENOMIC DNA]</scope>
    <source>
        <strain>ATCC 700550 / JCM 31522 / CIP 106686 / LMG 19005 / NCIMB 14063 / MR-1</strain>
    </source>
</reference>
<organism>
    <name type="scientific">Shewanella oneidensis (strain ATCC 700550 / JCM 31522 / CIP 106686 / LMG 19005 / NCIMB 14063 / MR-1)</name>
    <dbReference type="NCBI Taxonomy" id="211586"/>
    <lineage>
        <taxon>Bacteria</taxon>
        <taxon>Pseudomonadati</taxon>
        <taxon>Pseudomonadota</taxon>
        <taxon>Gammaproteobacteria</taxon>
        <taxon>Alteromonadales</taxon>
        <taxon>Shewanellaceae</taxon>
        <taxon>Shewanella</taxon>
    </lineage>
</organism>
<sequence length="65" mass="7125">MLILTRRVGETLMIGDEVTVTVLGVKGNQVRIGVNAPKEVSVHREEIYQRIQSEKSGTPSEGGNF</sequence>
<evidence type="ECO:0000255" key="1">
    <source>
        <dbReference type="HAMAP-Rule" id="MF_00167"/>
    </source>
</evidence>
<keyword id="KW-0010">Activator</keyword>
<keyword id="KW-0963">Cytoplasm</keyword>
<keyword id="KW-1185">Reference proteome</keyword>
<keyword id="KW-0678">Repressor</keyword>
<keyword id="KW-0694">RNA-binding</keyword>
<keyword id="KW-0810">Translation regulation</keyword>
<accession>Q8EBS3</accession>
<gene>
    <name evidence="1" type="primary">csrA</name>
    <name type="ordered locus">SO_3426</name>
</gene>